<comment type="function">
    <text evidence="1">Component of the A-type ATP synthase that produces ATP from ADP in the presence of a proton gradient across the membrane. The B chain is a regulatory subunit.</text>
</comment>
<comment type="subunit">
    <text evidence="1">Has multiple subunits with at least A(3), B(3), C, D, E, F, H, I and proteolipid K(x).</text>
</comment>
<comment type="subcellular location">
    <subcellularLocation>
        <location evidence="1">Cell membrane</location>
        <topology evidence="1">Peripheral membrane protein</topology>
    </subcellularLocation>
</comment>
<comment type="similarity">
    <text evidence="1">Belongs to the ATPase alpha/beta chains family.</text>
</comment>
<reference key="1">
    <citation type="journal article" date="1991" name="Arch. Biochem. Biophys.">
        <title>The ATP synthase of Halobacterium salinarium (halobium) is an archaebacterial type as revealed from the amino acid sequences of its two major subunits.</title>
        <authorList>
            <person name="Ihara K."/>
            <person name="Mukohata Y."/>
        </authorList>
    </citation>
    <scope>NUCLEOTIDE SEQUENCE [GENOMIC DNA]</scope>
    <scope>PROTEIN SEQUENCE OF 1-8; 272-344; 425-444 AND 446-471</scope>
</reference>
<reference key="2">
    <citation type="journal article" date="2000" name="Proc. Natl. Acad. Sci. U.S.A.">
        <title>Genome sequence of Halobacterium species NRC-1.</title>
        <authorList>
            <person name="Ng W.V."/>
            <person name="Kennedy S.P."/>
            <person name="Mahairas G.G."/>
            <person name="Berquist B."/>
            <person name="Pan M."/>
            <person name="Shukla H.D."/>
            <person name="Lasky S.R."/>
            <person name="Baliga N.S."/>
            <person name="Thorsson V."/>
            <person name="Sbrogna J."/>
            <person name="Swartzell S."/>
            <person name="Weir D."/>
            <person name="Hall J."/>
            <person name="Dahl T.A."/>
            <person name="Welti R."/>
            <person name="Goo Y.A."/>
            <person name="Leithauser B."/>
            <person name="Keller K."/>
            <person name="Cruz R."/>
            <person name="Danson M.J."/>
            <person name="Hough D.W."/>
            <person name="Maddocks D.G."/>
            <person name="Jablonski P.E."/>
            <person name="Krebs M.P."/>
            <person name="Angevine C.M."/>
            <person name="Dale H."/>
            <person name="Isenbarger T.A."/>
            <person name="Peck R.F."/>
            <person name="Pohlschroder M."/>
            <person name="Spudich J.L."/>
            <person name="Jung K.-H."/>
            <person name="Alam M."/>
            <person name="Freitas T."/>
            <person name="Hou S."/>
            <person name="Daniels C.J."/>
            <person name="Dennis P.P."/>
            <person name="Omer A.D."/>
            <person name="Ebhardt H."/>
            <person name="Lowe T.M."/>
            <person name="Liang P."/>
            <person name="Riley M."/>
            <person name="Hood L."/>
            <person name="DasSarma S."/>
        </authorList>
    </citation>
    <scope>NUCLEOTIDE SEQUENCE [LARGE SCALE GENOMIC DNA]</scope>
    <source>
        <strain>ATCC 700922 / JCM 11081 / NRC-1</strain>
    </source>
</reference>
<accession>Q9HNE4</accession>
<accession>P25164</accession>
<feature type="chain" id="PRO_0000144652" description="A-type ATP synthase subunit B">
    <location>
        <begin position="1"/>
        <end position="471"/>
    </location>
</feature>
<feature type="sequence conflict" description="In Ref. 1; CAA49776." evidence="2" ref="1">
    <original>E</original>
    <variation>Q</variation>
    <location>
        <position position="30"/>
    </location>
</feature>
<proteinExistence type="evidence at protein level"/>
<gene>
    <name evidence="1" type="primary">atpB</name>
    <name type="ordered locus">VNG_2138G</name>
</gene>
<keyword id="KW-0066">ATP synthesis</keyword>
<keyword id="KW-1003">Cell membrane</keyword>
<keyword id="KW-0903">Direct protein sequencing</keyword>
<keyword id="KW-0375">Hydrogen ion transport</keyword>
<keyword id="KW-0406">Ion transport</keyword>
<keyword id="KW-0472">Membrane</keyword>
<keyword id="KW-1185">Reference proteome</keyword>
<keyword id="KW-0813">Transport</keyword>
<evidence type="ECO:0000255" key="1">
    <source>
        <dbReference type="HAMAP-Rule" id="MF_00310"/>
    </source>
</evidence>
<evidence type="ECO:0000305" key="2"/>
<dbReference type="EMBL" id="X70294">
    <property type="protein sequence ID" value="CAA49776.1"/>
    <property type="molecule type" value="Genomic_DNA"/>
</dbReference>
<dbReference type="EMBL" id="AE004437">
    <property type="protein sequence ID" value="AAG20276.1"/>
    <property type="molecule type" value="Genomic_DNA"/>
</dbReference>
<dbReference type="PIR" id="H84363">
    <property type="entry name" value="H84363"/>
</dbReference>
<dbReference type="PIR" id="S14733">
    <property type="entry name" value="S14733"/>
</dbReference>
<dbReference type="RefSeq" id="WP_010903578.1">
    <property type="nucleotide sequence ID" value="NC_002607.1"/>
</dbReference>
<dbReference type="SMR" id="Q9HNE4"/>
<dbReference type="FunCoup" id="Q9HNE4">
    <property type="interactions" value="41"/>
</dbReference>
<dbReference type="STRING" id="64091.VNG_2138G"/>
<dbReference type="PaxDb" id="64091-VNG_2138G"/>
<dbReference type="KEGG" id="hal:VNG_2138G"/>
<dbReference type="PATRIC" id="fig|64091.14.peg.1636"/>
<dbReference type="HOGENOM" id="CLU_022916_0_0_2"/>
<dbReference type="InParanoid" id="Q9HNE4"/>
<dbReference type="OrthoDB" id="32941at2157"/>
<dbReference type="PhylomeDB" id="Q9HNE4"/>
<dbReference type="BioCyc" id="MetaCyc:MONOMER-682"/>
<dbReference type="Proteomes" id="UP000000554">
    <property type="component" value="Chromosome"/>
</dbReference>
<dbReference type="GO" id="GO:0005886">
    <property type="term" value="C:plasma membrane"/>
    <property type="evidence" value="ECO:0007669"/>
    <property type="project" value="UniProtKB-SubCell"/>
</dbReference>
<dbReference type="GO" id="GO:0033178">
    <property type="term" value="C:proton-transporting two-sector ATPase complex, catalytic domain"/>
    <property type="evidence" value="ECO:0007669"/>
    <property type="project" value="InterPro"/>
</dbReference>
<dbReference type="GO" id="GO:0005524">
    <property type="term" value="F:ATP binding"/>
    <property type="evidence" value="ECO:0007669"/>
    <property type="project" value="UniProtKB-UniRule"/>
</dbReference>
<dbReference type="GO" id="GO:0046933">
    <property type="term" value="F:proton-transporting ATP synthase activity, rotational mechanism"/>
    <property type="evidence" value="ECO:0007669"/>
    <property type="project" value="UniProtKB-UniRule"/>
</dbReference>
<dbReference type="GO" id="GO:0042777">
    <property type="term" value="P:proton motive force-driven plasma membrane ATP synthesis"/>
    <property type="evidence" value="ECO:0007669"/>
    <property type="project" value="UniProtKB-UniRule"/>
</dbReference>
<dbReference type="CDD" id="cd18112">
    <property type="entry name" value="ATP-synt_V_A-type_beta_C"/>
    <property type="match status" value="1"/>
</dbReference>
<dbReference type="CDD" id="cd18118">
    <property type="entry name" value="ATP-synt_V_A-type_beta_N"/>
    <property type="match status" value="1"/>
</dbReference>
<dbReference type="CDD" id="cd01135">
    <property type="entry name" value="V_A-ATPase_B"/>
    <property type="match status" value="1"/>
</dbReference>
<dbReference type="Gene3D" id="3.40.50.12240">
    <property type="match status" value="1"/>
</dbReference>
<dbReference type="HAMAP" id="MF_00310">
    <property type="entry name" value="ATP_synth_B_arch"/>
    <property type="match status" value="1"/>
</dbReference>
<dbReference type="InterPro" id="IPR055190">
    <property type="entry name" value="ATP-synt_VA_C"/>
</dbReference>
<dbReference type="InterPro" id="IPR020003">
    <property type="entry name" value="ATPase_a/bsu_AS"/>
</dbReference>
<dbReference type="InterPro" id="IPR005724">
    <property type="entry name" value="ATPase_A1-cplx_bsu"/>
</dbReference>
<dbReference type="InterPro" id="IPR004100">
    <property type="entry name" value="ATPase_F1/V1/A1_a/bsu_N"/>
</dbReference>
<dbReference type="InterPro" id="IPR000194">
    <property type="entry name" value="ATPase_F1/V1/A1_a/bsu_nucl-bd"/>
</dbReference>
<dbReference type="InterPro" id="IPR027417">
    <property type="entry name" value="P-loop_NTPase"/>
</dbReference>
<dbReference type="InterPro" id="IPR022879">
    <property type="entry name" value="V-ATPase_su_B/beta"/>
</dbReference>
<dbReference type="NCBIfam" id="TIGR01041">
    <property type="entry name" value="ATP_syn_B_arch"/>
    <property type="match status" value="1"/>
</dbReference>
<dbReference type="NCBIfam" id="NF003235">
    <property type="entry name" value="PRK04196.1"/>
    <property type="match status" value="1"/>
</dbReference>
<dbReference type="PANTHER" id="PTHR43389">
    <property type="entry name" value="V-TYPE PROTON ATPASE SUBUNIT B"/>
    <property type="match status" value="1"/>
</dbReference>
<dbReference type="PANTHER" id="PTHR43389:SF4">
    <property type="entry name" value="V-TYPE PROTON ATPASE SUBUNIT B"/>
    <property type="match status" value="1"/>
</dbReference>
<dbReference type="Pfam" id="PF00006">
    <property type="entry name" value="ATP-synt_ab"/>
    <property type="match status" value="1"/>
</dbReference>
<dbReference type="Pfam" id="PF02874">
    <property type="entry name" value="ATP-synt_ab_N"/>
    <property type="match status" value="1"/>
</dbReference>
<dbReference type="Pfam" id="PF22919">
    <property type="entry name" value="ATP-synt_VA_C"/>
    <property type="match status" value="1"/>
</dbReference>
<dbReference type="PIRSF" id="PIRSF039114">
    <property type="entry name" value="V-ATPsynth_beta/V-ATPase_B"/>
    <property type="match status" value="1"/>
</dbReference>
<dbReference type="SUPFAM" id="SSF47917">
    <property type="entry name" value="C-terminal domain of alpha and beta subunits of F1 ATP synthase"/>
    <property type="match status" value="1"/>
</dbReference>
<dbReference type="SUPFAM" id="SSF52540">
    <property type="entry name" value="P-loop containing nucleoside triphosphate hydrolases"/>
    <property type="match status" value="1"/>
</dbReference>
<dbReference type="PROSITE" id="PS00152">
    <property type="entry name" value="ATPASE_ALPHA_BETA"/>
    <property type="match status" value="1"/>
</dbReference>
<sequence length="471" mass="51958">MKEYQTITEVSGPLVYVETDEPIGYDEIVEIETPNGDVKRGQVLESSDGFVAIQVFEGTEGVGKDASVRFLGETLKMPVTEDLLGRVLDGSGNPIDGGPDIVPDDRVDIVGEAINPHAREYPEEFIQTGVSGIDGMNTLVRGQKLPIFSGSGLPHSDLALQIARQASVPEEEAETDDDEGSEFAVVFGAMGITAEEANEFMDDFERTGALERSVVFMNLADDPAVERTVTPRMALTTAEYLAFEKDYHVLVILTDMTNYCEALRQIGAAREEVPGRRGYPGYMYTDLAQLYERAGRIEGKEGSVTQIPILTMPGDDDTHPIPDLTGYITEGQIMMNRDLNSQGVTPPVNVLPSLSRLMDDGIGEGLTRADHGDVSDQLYAAYAEGEELRDLVNIVGREALSERDNRYLDFADRFEAEFIDQGFKTNRDIEETLDLGWELLSMFPKTELNRVDEDLIEDHYVEDVADEATAD</sequence>
<protein>
    <recommendedName>
        <fullName evidence="1">A-type ATP synthase subunit B</fullName>
    </recommendedName>
</protein>
<name>AATB_HALSA</name>
<organism>
    <name type="scientific">Halobacterium salinarum (strain ATCC 700922 / JCM 11081 / NRC-1)</name>
    <name type="common">Halobacterium halobium</name>
    <dbReference type="NCBI Taxonomy" id="64091"/>
    <lineage>
        <taxon>Archaea</taxon>
        <taxon>Methanobacteriati</taxon>
        <taxon>Methanobacteriota</taxon>
        <taxon>Stenosarchaea group</taxon>
        <taxon>Halobacteria</taxon>
        <taxon>Halobacteriales</taxon>
        <taxon>Halobacteriaceae</taxon>
        <taxon>Halobacterium</taxon>
        <taxon>Halobacterium salinarum NRC-34001</taxon>
    </lineage>
</organism>